<name>CP313_DROME</name>
<protein>
    <recommendedName>
        <fullName>Probable cytochrome P450 313b1</fullName>
        <ecNumber>1.14.-.-</ecNumber>
    </recommendedName>
    <alternativeName>
        <fullName>CYPCCCXIIIB1</fullName>
    </alternativeName>
</protein>
<sequence>MLASIILSGWLLLAWLYFLWSRRRYYKVAWQLRGPIGWPLIGMGLQMMNPETFLQYMDGLSRQFKAPFISWMGTSCFLYINDPHSVEQILNSTHCTNKGDFYRFMSSAIGDGLFTSSSPRWHKHRRLINPAFGRQILSNFLPIFNAEAEVLLQKLELEGVQHGKRLEIYQILKKIVLEAACQTTMGKKMNFQHDGSLCIFKAYNGLTEVCVKRMLSPWLYPDLIYRRSGLFRLQQKVVGILFGFIEQLLEPIVSVVAANSNPDQQRSEMEMRGKSKAIFIEQVREHVERGQLSWQDVRDEANVTIAATFETTSTALYFTILCLAMHPCYQEKLHKELVTELPPSGDINLEQLQRLEYTEMVINEAMRLFAPVPMVLRSADQDIQLKRGDGEFLIPRGTQIGIDIYNMQRDERVWGPLSRTYNPDAHFGLDSPQRHAFAFVPFTKGLRMCIGYRYAQMLMKLLLARIFRSYRISTEARLEELLVKGNISLKLKDYPLCRVERR</sequence>
<accession>Q9VHP4</accession>
<accession>Q8SZA9</accession>
<gene>
    <name type="primary">Cyp313b1</name>
    <name type="ORF">CG9716</name>
</gene>
<proteinExistence type="evidence at transcript level"/>
<feature type="chain" id="PRO_0000052328" description="Probable cytochrome P450 313b1">
    <location>
        <begin position="1"/>
        <end position="502"/>
    </location>
</feature>
<feature type="binding site" description="axial binding residue" evidence="1">
    <location>
        <position position="449"/>
    </location>
    <ligand>
        <name>heme</name>
        <dbReference type="ChEBI" id="CHEBI:30413"/>
    </ligand>
    <ligandPart>
        <name>Fe</name>
        <dbReference type="ChEBI" id="CHEBI:18248"/>
    </ligandPart>
</feature>
<keyword id="KW-0256">Endoplasmic reticulum</keyword>
<keyword id="KW-0349">Heme</keyword>
<keyword id="KW-0408">Iron</keyword>
<keyword id="KW-0472">Membrane</keyword>
<keyword id="KW-0479">Metal-binding</keyword>
<keyword id="KW-0492">Microsome</keyword>
<keyword id="KW-0503">Monooxygenase</keyword>
<keyword id="KW-0560">Oxidoreductase</keyword>
<keyword id="KW-1185">Reference proteome</keyword>
<reference key="1">
    <citation type="journal article" date="2000" name="Science">
        <title>The genome sequence of Drosophila melanogaster.</title>
        <authorList>
            <person name="Adams M.D."/>
            <person name="Celniker S.E."/>
            <person name="Holt R.A."/>
            <person name="Evans C.A."/>
            <person name="Gocayne J.D."/>
            <person name="Amanatides P.G."/>
            <person name="Scherer S.E."/>
            <person name="Li P.W."/>
            <person name="Hoskins R.A."/>
            <person name="Galle R.F."/>
            <person name="George R.A."/>
            <person name="Lewis S.E."/>
            <person name="Richards S."/>
            <person name="Ashburner M."/>
            <person name="Henderson S.N."/>
            <person name="Sutton G.G."/>
            <person name="Wortman J.R."/>
            <person name="Yandell M.D."/>
            <person name="Zhang Q."/>
            <person name="Chen L.X."/>
            <person name="Brandon R.C."/>
            <person name="Rogers Y.-H.C."/>
            <person name="Blazej R.G."/>
            <person name="Champe M."/>
            <person name="Pfeiffer B.D."/>
            <person name="Wan K.H."/>
            <person name="Doyle C."/>
            <person name="Baxter E.G."/>
            <person name="Helt G."/>
            <person name="Nelson C.R."/>
            <person name="Miklos G.L.G."/>
            <person name="Abril J.F."/>
            <person name="Agbayani A."/>
            <person name="An H.-J."/>
            <person name="Andrews-Pfannkoch C."/>
            <person name="Baldwin D."/>
            <person name="Ballew R.M."/>
            <person name="Basu A."/>
            <person name="Baxendale J."/>
            <person name="Bayraktaroglu L."/>
            <person name="Beasley E.M."/>
            <person name="Beeson K.Y."/>
            <person name="Benos P.V."/>
            <person name="Berman B.P."/>
            <person name="Bhandari D."/>
            <person name="Bolshakov S."/>
            <person name="Borkova D."/>
            <person name="Botchan M.R."/>
            <person name="Bouck J."/>
            <person name="Brokstein P."/>
            <person name="Brottier P."/>
            <person name="Burtis K.C."/>
            <person name="Busam D.A."/>
            <person name="Butler H."/>
            <person name="Cadieu E."/>
            <person name="Center A."/>
            <person name="Chandra I."/>
            <person name="Cherry J.M."/>
            <person name="Cawley S."/>
            <person name="Dahlke C."/>
            <person name="Davenport L.B."/>
            <person name="Davies P."/>
            <person name="de Pablos B."/>
            <person name="Delcher A."/>
            <person name="Deng Z."/>
            <person name="Mays A.D."/>
            <person name="Dew I."/>
            <person name="Dietz S.M."/>
            <person name="Dodson K."/>
            <person name="Doup L.E."/>
            <person name="Downes M."/>
            <person name="Dugan-Rocha S."/>
            <person name="Dunkov B.C."/>
            <person name="Dunn P."/>
            <person name="Durbin K.J."/>
            <person name="Evangelista C.C."/>
            <person name="Ferraz C."/>
            <person name="Ferriera S."/>
            <person name="Fleischmann W."/>
            <person name="Fosler C."/>
            <person name="Gabrielian A.E."/>
            <person name="Garg N.S."/>
            <person name="Gelbart W.M."/>
            <person name="Glasser K."/>
            <person name="Glodek A."/>
            <person name="Gong F."/>
            <person name="Gorrell J.H."/>
            <person name="Gu Z."/>
            <person name="Guan P."/>
            <person name="Harris M."/>
            <person name="Harris N.L."/>
            <person name="Harvey D.A."/>
            <person name="Heiman T.J."/>
            <person name="Hernandez J.R."/>
            <person name="Houck J."/>
            <person name="Hostin D."/>
            <person name="Houston K.A."/>
            <person name="Howland T.J."/>
            <person name="Wei M.-H."/>
            <person name="Ibegwam C."/>
            <person name="Jalali M."/>
            <person name="Kalush F."/>
            <person name="Karpen G.H."/>
            <person name="Ke Z."/>
            <person name="Kennison J.A."/>
            <person name="Ketchum K.A."/>
            <person name="Kimmel B.E."/>
            <person name="Kodira C.D."/>
            <person name="Kraft C.L."/>
            <person name="Kravitz S."/>
            <person name="Kulp D."/>
            <person name="Lai Z."/>
            <person name="Lasko P."/>
            <person name="Lei Y."/>
            <person name="Levitsky A.A."/>
            <person name="Li J.H."/>
            <person name="Li Z."/>
            <person name="Liang Y."/>
            <person name="Lin X."/>
            <person name="Liu X."/>
            <person name="Mattei B."/>
            <person name="McIntosh T.C."/>
            <person name="McLeod M.P."/>
            <person name="McPherson D."/>
            <person name="Merkulov G."/>
            <person name="Milshina N.V."/>
            <person name="Mobarry C."/>
            <person name="Morris J."/>
            <person name="Moshrefi A."/>
            <person name="Mount S.M."/>
            <person name="Moy M."/>
            <person name="Murphy B."/>
            <person name="Murphy L."/>
            <person name="Muzny D.M."/>
            <person name="Nelson D.L."/>
            <person name="Nelson D.R."/>
            <person name="Nelson K.A."/>
            <person name="Nixon K."/>
            <person name="Nusskern D.R."/>
            <person name="Pacleb J.M."/>
            <person name="Palazzolo M."/>
            <person name="Pittman G.S."/>
            <person name="Pan S."/>
            <person name="Pollard J."/>
            <person name="Puri V."/>
            <person name="Reese M.G."/>
            <person name="Reinert K."/>
            <person name="Remington K."/>
            <person name="Saunders R.D.C."/>
            <person name="Scheeler F."/>
            <person name="Shen H."/>
            <person name="Shue B.C."/>
            <person name="Siden-Kiamos I."/>
            <person name="Simpson M."/>
            <person name="Skupski M.P."/>
            <person name="Smith T.J."/>
            <person name="Spier E."/>
            <person name="Spradling A.C."/>
            <person name="Stapleton M."/>
            <person name="Strong R."/>
            <person name="Sun E."/>
            <person name="Svirskas R."/>
            <person name="Tector C."/>
            <person name="Turner R."/>
            <person name="Venter E."/>
            <person name="Wang A.H."/>
            <person name="Wang X."/>
            <person name="Wang Z.-Y."/>
            <person name="Wassarman D.A."/>
            <person name="Weinstock G.M."/>
            <person name="Weissenbach J."/>
            <person name="Williams S.M."/>
            <person name="Woodage T."/>
            <person name="Worley K.C."/>
            <person name="Wu D."/>
            <person name="Yang S."/>
            <person name="Yao Q.A."/>
            <person name="Ye J."/>
            <person name="Yeh R.-F."/>
            <person name="Zaveri J.S."/>
            <person name="Zhan M."/>
            <person name="Zhang G."/>
            <person name="Zhao Q."/>
            <person name="Zheng L."/>
            <person name="Zheng X.H."/>
            <person name="Zhong F.N."/>
            <person name="Zhong W."/>
            <person name="Zhou X."/>
            <person name="Zhu S.C."/>
            <person name="Zhu X."/>
            <person name="Smith H.O."/>
            <person name="Gibbs R.A."/>
            <person name="Myers E.W."/>
            <person name="Rubin G.M."/>
            <person name="Venter J.C."/>
        </authorList>
    </citation>
    <scope>NUCLEOTIDE SEQUENCE [LARGE SCALE GENOMIC DNA]</scope>
    <source>
        <strain>Berkeley</strain>
    </source>
</reference>
<reference key="2">
    <citation type="journal article" date="2002" name="Genome Biol.">
        <title>Annotation of the Drosophila melanogaster euchromatic genome: a systematic review.</title>
        <authorList>
            <person name="Misra S."/>
            <person name="Crosby M.A."/>
            <person name="Mungall C.J."/>
            <person name="Matthews B.B."/>
            <person name="Campbell K.S."/>
            <person name="Hradecky P."/>
            <person name="Huang Y."/>
            <person name="Kaminker J.S."/>
            <person name="Millburn G.H."/>
            <person name="Prochnik S.E."/>
            <person name="Smith C.D."/>
            <person name="Tupy J.L."/>
            <person name="Whitfield E.J."/>
            <person name="Bayraktaroglu L."/>
            <person name="Berman B.P."/>
            <person name="Bettencourt B.R."/>
            <person name="Celniker S.E."/>
            <person name="de Grey A.D.N.J."/>
            <person name="Drysdale R.A."/>
            <person name="Harris N.L."/>
            <person name="Richter J."/>
            <person name="Russo S."/>
            <person name="Schroeder A.J."/>
            <person name="Shu S.Q."/>
            <person name="Stapleton M."/>
            <person name="Yamada C."/>
            <person name="Ashburner M."/>
            <person name="Gelbart W.M."/>
            <person name="Rubin G.M."/>
            <person name="Lewis S.E."/>
        </authorList>
    </citation>
    <scope>GENOME REANNOTATION</scope>
    <source>
        <strain>Berkeley</strain>
    </source>
</reference>
<reference key="3">
    <citation type="journal article" date="2002" name="Genome Biol.">
        <title>A Drosophila full-length cDNA resource.</title>
        <authorList>
            <person name="Stapleton M."/>
            <person name="Carlson J.W."/>
            <person name="Brokstein P."/>
            <person name="Yu C."/>
            <person name="Champe M."/>
            <person name="George R.A."/>
            <person name="Guarin H."/>
            <person name="Kronmiller B."/>
            <person name="Pacleb J.M."/>
            <person name="Park S."/>
            <person name="Wan K.H."/>
            <person name="Rubin G.M."/>
            <person name="Celniker S.E."/>
        </authorList>
    </citation>
    <scope>NUCLEOTIDE SEQUENCE [LARGE SCALE MRNA]</scope>
    <source>
        <strain>Berkeley</strain>
        <tissue>Embryo</tissue>
    </source>
</reference>
<organism>
    <name type="scientific">Drosophila melanogaster</name>
    <name type="common">Fruit fly</name>
    <dbReference type="NCBI Taxonomy" id="7227"/>
    <lineage>
        <taxon>Eukaryota</taxon>
        <taxon>Metazoa</taxon>
        <taxon>Ecdysozoa</taxon>
        <taxon>Arthropoda</taxon>
        <taxon>Hexapoda</taxon>
        <taxon>Insecta</taxon>
        <taxon>Pterygota</taxon>
        <taxon>Neoptera</taxon>
        <taxon>Endopterygota</taxon>
        <taxon>Diptera</taxon>
        <taxon>Brachycera</taxon>
        <taxon>Muscomorpha</taxon>
        <taxon>Ephydroidea</taxon>
        <taxon>Drosophilidae</taxon>
        <taxon>Drosophila</taxon>
        <taxon>Sophophora</taxon>
    </lineage>
</organism>
<dbReference type="EC" id="1.14.-.-"/>
<dbReference type="EMBL" id="AE014297">
    <property type="protein sequence ID" value="AAF54257.2"/>
    <property type="molecule type" value="Genomic_DNA"/>
</dbReference>
<dbReference type="EMBL" id="AY070999">
    <property type="protein sequence ID" value="AAL48621.1"/>
    <property type="molecule type" value="mRNA"/>
</dbReference>
<dbReference type="RefSeq" id="NP_001287239.1">
    <property type="nucleotide sequence ID" value="NM_001300310.1"/>
</dbReference>
<dbReference type="RefSeq" id="NP_649807.1">
    <property type="nucleotide sequence ID" value="NM_141550.3"/>
</dbReference>
<dbReference type="SMR" id="Q9VHP4"/>
<dbReference type="FunCoup" id="Q9VHP4">
    <property type="interactions" value="2"/>
</dbReference>
<dbReference type="STRING" id="7227.FBpp0310719"/>
<dbReference type="PaxDb" id="7227-FBpp0081379"/>
<dbReference type="DNASU" id="41019"/>
<dbReference type="EnsemblMetazoa" id="FBtr0081893">
    <property type="protein sequence ID" value="FBpp0081379"/>
    <property type="gene ID" value="FBgn0037601"/>
</dbReference>
<dbReference type="EnsemblMetazoa" id="FBtr0344337">
    <property type="protein sequence ID" value="FBpp0310719"/>
    <property type="gene ID" value="FBgn0037601"/>
</dbReference>
<dbReference type="GeneID" id="41019"/>
<dbReference type="KEGG" id="dme:Dmel_CG9716"/>
<dbReference type="UCSC" id="CG9716-RA">
    <property type="organism name" value="d. melanogaster"/>
</dbReference>
<dbReference type="AGR" id="FB:FBgn0037601"/>
<dbReference type="CTD" id="41019"/>
<dbReference type="FlyBase" id="FBgn0037601">
    <property type="gene designation" value="Cyp313b1"/>
</dbReference>
<dbReference type="VEuPathDB" id="VectorBase:FBgn0037601"/>
<dbReference type="eggNOG" id="KOG0157">
    <property type="taxonomic scope" value="Eukaryota"/>
</dbReference>
<dbReference type="GeneTree" id="ENSGT00940000167150"/>
<dbReference type="HOGENOM" id="CLU_001570_5_1_1"/>
<dbReference type="InParanoid" id="Q9VHP4"/>
<dbReference type="OMA" id="YYKAAWQ"/>
<dbReference type="OrthoDB" id="1470350at2759"/>
<dbReference type="PhylomeDB" id="Q9VHP4"/>
<dbReference type="BioGRID-ORCS" id="41019">
    <property type="hits" value="0 hits in 1 CRISPR screen"/>
</dbReference>
<dbReference type="GenomeRNAi" id="41019"/>
<dbReference type="PRO" id="PR:Q9VHP4"/>
<dbReference type="Proteomes" id="UP000000803">
    <property type="component" value="Chromosome 3R"/>
</dbReference>
<dbReference type="Bgee" id="FBgn0037601">
    <property type="expression patterns" value="Expressed in adult tracheocyte (Drosophila) in Malpighian tubule and 17 other cell types or tissues"/>
</dbReference>
<dbReference type="ExpressionAtlas" id="Q9VHP4">
    <property type="expression patterns" value="baseline and differential"/>
</dbReference>
<dbReference type="GO" id="GO:0005789">
    <property type="term" value="C:endoplasmic reticulum membrane"/>
    <property type="evidence" value="ECO:0007669"/>
    <property type="project" value="UniProtKB-SubCell"/>
</dbReference>
<dbReference type="GO" id="GO:0020037">
    <property type="term" value="F:heme binding"/>
    <property type="evidence" value="ECO:0007669"/>
    <property type="project" value="InterPro"/>
</dbReference>
<dbReference type="GO" id="GO:0005506">
    <property type="term" value="F:iron ion binding"/>
    <property type="evidence" value="ECO:0007669"/>
    <property type="project" value="InterPro"/>
</dbReference>
<dbReference type="GO" id="GO:0004497">
    <property type="term" value="F:monooxygenase activity"/>
    <property type="evidence" value="ECO:0007669"/>
    <property type="project" value="UniProtKB-KW"/>
</dbReference>
<dbReference type="GO" id="GO:0016705">
    <property type="term" value="F:oxidoreductase activity, acting on paired donors, with incorporation or reduction of molecular oxygen"/>
    <property type="evidence" value="ECO:0007669"/>
    <property type="project" value="InterPro"/>
</dbReference>
<dbReference type="CDD" id="cd11057">
    <property type="entry name" value="CYP313-like"/>
    <property type="match status" value="1"/>
</dbReference>
<dbReference type="Gene3D" id="1.10.630.10">
    <property type="entry name" value="Cytochrome P450"/>
    <property type="match status" value="1"/>
</dbReference>
<dbReference type="InterPro" id="IPR001128">
    <property type="entry name" value="Cyt_P450"/>
</dbReference>
<dbReference type="InterPro" id="IPR002401">
    <property type="entry name" value="Cyt_P450_E_grp-I"/>
</dbReference>
<dbReference type="InterPro" id="IPR036396">
    <property type="entry name" value="Cyt_P450_sf"/>
</dbReference>
<dbReference type="InterPro" id="IPR050196">
    <property type="entry name" value="Cytochrome_P450_Monoox"/>
</dbReference>
<dbReference type="PANTHER" id="PTHR24291">
    <property type="entry name" value="CYTOCHROME P450 FAMILY 4"/>
    <property type="match status" value="1"/>
</dbReference>
<dbReference type="PANTHER" id="PTHR24291:SF201">
    <property type="entry name" value="CYTOCHROME P450, FAMILY 4, SUBFAMILY B, POLYPEPTIDE 7"/>
    <property type="match status" value="1"/>
</dbReference>
<dbReference type="Pfam" id="PF00067">
    <property type="entry name" value="p450"/>
    <property type="match status" value="1"/>
</dbReference>
<dbReference type="PRINTS" id="PR00463">
    <property type="entry name" value="EP450I"/>
</dbReference>
<dbReference type="PRINTS" id="PR00385">
    <property type="entry name" value="P450"/>
</dbReference>
<dbReference type="SUPFAM" id="SSF48264">
    <property type="entry name" value="Cytochrome P450"/>
    <property type="match status" value="1"/>
</dbReference>
<evidence type="ECO:0000250" key="1"/>
<evidence type="ECO:0000305" key="2"/>
<comment type="function">
    <text evidence="1">May be involved in the metabolism of insect hormones and in the breakdown of synthetic insecticides.</text>
</comment>
<comment type="cofactor">
    <cofactor evidence="1">
        <name>heme</name>
        <dbReference type="ChEBI" id="CHEBI:30413"/>
    </cofactor>
</comment>
<comment type="subcellular location">
    <subcellularLocation>
        <location evidence="2">Endoplasmic reticulum membrane</location>
        <topology evidence="2">Peripheral membrane protein</topology>
    </subcellularLocation>
    <subcellularLocation>
        <location evidence="2">Microsome membrane</location>
        <topology evidence="2">Peripheral membrane protein</topology>
    </subcellularLocation>
</comment>
<comment type="similarity">
    <text evidence="2">Belongs to the cytochrome P450 family.</text>
</comment>